<sequence length="102" mass="11648">MDTVRLSHLVLQEGINHTMALWKFQAFELFTDHLNPEMCLSRDISLYTSMALMLVRIVVEAKRKVLVIWKAAFQSLQDGTCHGTICAHCSLEHYSLSTFVCC</sequence>
<gene>
    <name type="ordered locus">YAL045C</name>
</gene>
<dbReference type="EMBL" id="U12980">
    <property type="protein sequence ID" value="AAC04986.1"/>
    <property type="molecule type" value="Genomic_DNA"/>
</dbReference>
<dbReference type="PIR" id="S51974">
    <property type="entry name" value="S51974"/>
</dbReference>
<dbReference type="DIP" id="DIP-5699N"/>
<dbReference type="IntAct" id="P39725">
    <property type="interactions" value="1"/>
</dbReference>
<dbReference type="PaxDb" id="4932-YAL045C"/>
<dbReference type="EnsemblFungi" id="YAL045C_mRNA">
    <property type="protein sequence ID" value="YAL045C"/>
    <property type="gene ID" value="YAL045C"/>
</dbReference>
<dbReference type="AGR" id="SGD:S000000043"/>
<dbReference type="SGD" id="S000000043">
    <property type="gene designation" value="YAL045C"/>
</dbReference>
<dbReference type="HOGENOM" id="CLU_2279671_0_0_1"/>
<dbReference type="ChiTaRS" id="YAL045C">
    <property type="organism name" value="yeast"/>
</dbReference>
<feature type="chain" id="PRO_0000202420" description="Putative uncharacterized protein YAL045C">
    <location>
        <begin position="1"/>
        <end position="102"/>
    </location>
</feature>
<proteinExistence type="uncertain"/>
<accession>P39725</accession>
<organism>
    <name type="scientific">Saccharomyces cerevisiae (strain ATCC 204508 / S288c)</name>
    <name type="common">Baker's yeast</name>
    <dbReference type="NCBI Taxonomy" id="559292"/>
    <lineage>
        <taxon>Eukaryota</taxon>
        <taxon>Fungi</taxon>
        <taxon>Dikarya</taxon>
        <taxon>Ascomycota</taxon>
        <taxon>Saccharomycotina</taxon>
        <taxon>Saccharomycetes</taxon>
        <taxon>Saccharomycetales</taxon>
        <taxon>Saccharomycetaceae</taxon>
        <taxon>Saccharomyces</taxon>
    </lineage>
</organism>
<comment type="miscellaneous">
    <text evidence="1">Almost completely overlaps YAL044W-A.</text>
</comment>
<comment type="caution">
    <text evidence="2">Product of a dubious gene prediction unlikely to encode a functional protein. Because of that it is not part of the S.cerevisiae S288c complete/reference proteome set.</text>
</comment>
<protein>
    <recommendedName>
        <fullName>Putative uncharacterized protein YAL045C</fullName>
    </recommendedName>
</protein>
<evidence type="ECO:0000305" key="1"/>
<evidence type="ECO:0000305" key="2">
    <source>
    </source>
</evidence>
<reference key="1">
    <citation type="journal article" date="1995" name="Proc. Natl. Acad. Sci. U.S.A.">
        <title>The nucleotide sequence of chromosome I from Saccharomyces cerevisiae.</title>
        <authorList>
            <person name="Bussey H."/>
            <person name="Kaback D.B."/>
            <person name="Zhong W.-W."/>
            <person name="Vo D.H."/>
            <person name="Clark M.W."/>
            <person name="Fortin N."/>
            <person name="Hall J."/>
            <person name="Ouellette B.F.F."/>
            <person name="Keng T."/>
            <person name="Barton A.B."/>
            <person name="Su Y."/>
            <person name="Davies C.J."/>
            <person name="Storms R.K."/>
        </authorList>
    </citation>
    <scope>NUCLEOTIDE SEQUENCE [LARGE SCALE GENOMIC DNA]</scope>
    <source>
        <strain>ATCC 204508 / S288c</strain>
    </source>
</reference>
<reference key="2">
    <citation type="journal article" date="2014" name="G3 (Bethesda)">
        <title>The reference genome sequence of Saccharomyces cerevisiae: Then and now.</title>
        <authorList>
            <person name="Engel S.R."/>
            <person name="Dietrich F.S."/>
            <person name="Fisk D.G."/>
            <person name="Binkley G."/>
            <person name="Balakrishnan R."/>
            <person name="Costanzo M.C."/>
            <person name="Dwight S.S."/>
            <person name="Hitz B.C."/>
            <person name="Karra K."/>
            <person name="Nash R.S."/>
            <person name="Weng S."/>
            <person name="Wong E.D."/>
            <person name="Lloyd P."/>
            <person name="Skrzypek M.S."/>
            <person name="Miyasato S.R."/>
            <person name="Simison M."/>
            <person name="Cherry J.M."/>
        </authorList>
    </citation>
    <scope>GENOME REANNOTATION</scope>
    <source>
        <strain>ATCC 204508 / S288c</strain>
    </source>
</reference>
<name>YAE5_YEAST</name>